<proteinExistence type="inferred from homology"/>
<name>HTPG_ALKMQ</name>
<protein>
    <recommendedName>
        <fullName evidence="1">Chaperone protein HtpG</fullName>
    </recommendedName>
    <alternativeName>
        <fullName evidence="1">Heat shock protein HtpG</fullName>
    </alternativeName>
    <alternativeName>
        <fullName evidence="1">High temperature protein G</fullName>
    </alternativeName>
</protein>
<organism>
    <name type="scientific">Alkaliphilus metalliredigens (strain QYMF)</name>
    <dbReference type="NCBI Taxonomy" id="293826"/>
    <lineage>
        <taxon>Bacteria</taxon>
        <taxon>Bacillati</taxon>
        <taxon>Bacillota</taxon>
        <taxon>Clostridia</taxon>
        <taxon>Peptostreptococcales</taxon>
        <taxon>Natronincolaceae</taxon>
        <taxon>Alkaliphilus</taxon>
    </lineage>
</organism>
<comment type="function">
    <text evidence="1">Molecular chaperone. Has ATPase activity.</text>
</comment>
<comment type="subunit">
    <text evidence="1">Homodimer.</text>
</comment>
<comment type="subcellular location">
    <subcellularLocation>
        <location evidence="1">Cytoplasm</location>
    </subcellularLocation>
</comment>
<comment type="similarity">
    <text evidence="1">Belongs to the heat shock protein 90 family.</text>
</comment>
<evidence type="ECO:0000255" key="1">
    <source>
        <dbReference type="HAMAP-Rule" id="MF_00505"/>
    </source>
</evidence>
<sequence>MIKKEFKAESKRLLDLMINSIYTHKEIFLRELISNSSDAIDKIYYKALTDESMIFNKEDYYIKITTDKENKMLIISDMGIGMTKEELEENLGVIAQSGSFTFKKENEIKDGFDIIGQFGVGFYSAFMVADSVTVISKALGSDQGYKWESIGAEGYTIEPYEKESVGTEIILKLKENTEDEKYEDYLEAYRLKTIIKKYSDFIRYPIKMDIETSKPKEGAEGEYEEIVEEQVVNSMVPMWRRNKNELTKEDYDLFYSEKHYGFDKPLKHIHISADGAVRYNAILFIPEKIPYDFYTKEYEKGLELYSSGVLIMNKCSDLLPDYFSFVKGMVDSEDLSLNISREMLQHDRQLKIIAKKIKEKIKSELELLLKNERERYEEFYDSFGRQIKYGVYSDFGQNKETLKDLLLFYSSKEKKMVTLDEYVGRMKEDQKYIYYASGDSIEKIDKMPQTELLAEQGYEILYFADDVDEFAIRVLVDYKEKEFKSVSSGDLGIEEKDEKEEQEEQTQGSKEVFAFMKEALSQKVKDVRPSKRLKNHPVCLATDGDVTIEMEKILSAMPNNQEIKAERVLEININHDVFKTLKEAFDNDQEKLKIYTNVLYNQALLIEGLTINDPVEFTNDICKLMS</sequence>
<keyword id="KW-0067">ATP-binding</keyword>
<keyword id="KW-0143">Chaperone</keyword>
<keyword id="KW-0963">Cytoplasm</keyword>
<keyword id="KW-0547">Nucleotide-binding</keyword>
<keyword id="KW-1185">Reference proteome</keyword>
<keyword id="KW-0346">Stress response</keyword>
<gene>
    <name evidence="1" type="primary">htpG</name>
    <name type="ordered locus">Amet_0521</name>
</gene>
<accession>A6TKN0</accession>
<feature type="chain" id="PRO_1000060522" description="Chaperone protein HtpG">
    <location>
        <begin position="1"/>
        <end position="626"/>
    </location>
</feature>
<feature type="region of interest" description="A; substrate-binding" evidence="1">
    <location>
        <begin position="1"/>
        <end position="341"/>
    </location>
</feature>
<feature type="region of interest" description="B" evidence="1">
    <location>
        <begin position="342"/>
        <end position="552"/>
    </location>
</feature>
<feature type="region of interest" description="C" evidence="1">
    <location>
        <begin position="553"/>
        <end position="626"/>
    </location>
</feature>
<dbReference type="EMBL" id="CP000724">
    <property type="protein sequence ID" value="ABR46748.1"/>
    <property type="molecule type" value="Genomic_DNA"/>
</dbReference>
<dbReference type="RefSeq" id="WP_011971656.1">
    <property type="nucleotide sequence ID" value="NC_009633.1"/>
</dbReference>
<dbReference type="SMR" id="A6TKN0"/>
<dbReference type="STRING" id="293826.Amet_0521"/>
<dbReference type="KEGG" id="amt:Amet_0521"/>
<dbReference type="eggNOG" id="COG0326">
    <property type="taxonomic scope" value="Bacteria"/>
</dbReference>
<dbReference type="HOGENOM" id="CLU_006684_3_0_9"/>
<dbReference type="OrthoDB" id="9802640at2"/>
<dbReference type="Proteomes" id="UP000001572">
    <property type="component" value="Chromosome"/>
</dbReference>
<dbReference type="GO" id="GO:0005737">
    <property type="term" value="C:cytoplasm"/>
    <property type="evidence" value="ECO:0007669"/>
    <property type="project" value="UniProtKB-SubCell"/>
</dbReference>
<dbReference type="GO" id="GO:0005524">
    <property type="term" value="F:ATP binding"/>
    <property type="evidence" value="ECO:0007669"/>
    <property type="project" value="UniProtKB-UniRule"/>
</dbReference>
<dbReference type="GO" id="GO:0016887">
    <property type="term" value="F:ATP hydrolysis activity"/>
    <property type="evidence" value="ECO:0007669"/>
    <property type="project" value="InterPro"/>
</dbReference>
<dbReference type="GO" id="GO:0140662">
    <property type="term" value="F:ATP-dependent protein folding chaperone"/>
    <property type="evidence" value="ECO:0007669"/>
    <property type="project" value="InterPro"/>
</dbReference>
<dbReference type="GO" id="GO:0051082">
    <property type="term" value="F:unfolded protein binding"/>
    <property type="evidence" value="ECO:0007669"/>
    <property type="project" value="UniProtKB-UniRule"/>
</dbReference>
<dbReference type="CDD" id="cd16927">
    <property type="entry name" value="HATPase_Hsp90-like"/>
    <property type="match status" value="1"/>
</dbReference>
<dbReference type="FunFam" id="1.20.120.790:FF:000006">
    <property type="entry name" value="Chaperone protein HtpG"/>
    <property type="match status" value="1"/>
</dbReference>
<dbReference type="FunFam" id="3.40.50.11260:FF:000008">
    <property type="entry name" value="Chaperone protein HtpG"/>
    <property type="match status" value="1"/>
</dbReference>
<dbReference type="Gene3D" id="3.30.230.80">
    <property type="match status" value="1"/>
</dbReference>
<dbReference type="Gene3D" id="3.40.50.11260">
    <property type="match status" value="1"/>
</dbReference>
<dbReference type="Gene3D" id="1.20.120.790">
    <property type="entry name" value="Heat shock protein 90, C-terminal domain"/>
    <property type="match status" value="1"/>
</dbReference>
<dbReference type="Gene3D" id="3.30.565.10">
    <property type="entry name" value="Histidine kinase-like ATPase, C-terminal domain"/>
    <property type="match status" value="1"/>
</dbReference>
<dbReference type="HAMAP" id="MF_00505">
    <property type="entry name" value="HSP90"/>
    <property type="match status" value="1"/>
</dbReference>
<dbReference type="InterPro" id="IPR036890">
    <property type="entry name" value="HATPase_C_sf"/>
</dbReference>
<dbReference type="InterPro" id="IPR019805">
    <property type="entry name" value="Heat_shock_protein_90_CS"/>
</dbReference>
<dbReference type="InterPro" id="IPR037196">
    <property type="entry name" value="HSP90_C"/>
</dbReference>
<dbReference type="InterPro" id="IPR001404">
    <property type="entry name" value="Hsp90_fam"/>
</dbReference>
<dbReference type="InterPro" id="IPR020575">
    <property type="entry name" value="Hsp90_N"/>
</dbReference>
<dbReference type="InterPro" id="IPR020568">
    <property type="entry name" value="Ribosomal_Su5_D2-typ_SF"/>
</dbReference>
<dbReference type="NCBIfam" id="NF003555">
    <property type="entry name" value="PRK05218.1"/>
    <property type="match status" value="1"/>
</dbReference>
<dbReference type="PANTHER" id="PTHR11528">
    <property type="entry name" value="HEAT SHOCK PROTEIN 90 FAMILY MEMBER"/>
    <property type="match status" value="1"/>
</dbReference>
<dbReference type="Pfam" id="PF13589">
    <property type="entry name" value="HATPase_c_3"/>
    <property type="match status" value="1"/>
</dbReference>
<dbReference type="Pfam" id="PF00183">
    <property type="entry name" value="HSP90"/>
    <property type="match status" value="2"/>
</dbReference>
<dbReference type="PIRSF" id="PIRSF002583">
    <property type="entry name" value="Hsp90"/>
    <property type="match status" value="1"/>
</dbReference>
<dbReference type="PRINTS" id="PR00775">
    <property type="entry name" value="HEATSHOCK90"/>
</dbReference>
<dbReference type="SUPFAM" id="SSF55874">
    <property type="entry name" value="ATPase domain of HSP90 chaperone/DNA topoisomerase II/histidine kinase"/>
    <property type="match status" value="1"/>
</dbReference>
<dbReference type="SUPFAM" id="SSF110942">
    <property type="entry name" value="HSP90 C-terminal domain"/>
    <property type="match status" value="1"/>
</dbReference>
<dbReference type="SUPFAM" id="SSF54211">
    <property type="entry name" value="Ribosomal protein S5 domain 2-like"/>
    <property type="match status" value="1"/>
</dbReference>
<dbReference type="PROSITE" id="PS00298">
    <property type="entry name" value="HSP90"/>
    <property type="match status" value="1"/>
</dbReference>
<reference key="1">
    <citation type="journal article" date="2016" name="Genome Announc.">
        <title>Complete genome sequence of Alkaliphilus metalliredigens strain QYMF, an alkaliphilic and metal-reducing bacterium isolated from borax-contaminated leachate ponds.</title>
        <authorList>
            <person name="Hwang C."/>
            <person name="Copeland A."/>
            <person name="Lucas S."/>
            <person name="Lapidus A."/>
            <person name="Barry K."/>
            <person name="Detter J.C."/>
            <person name="Glavina Del Rio T."/>
            <person name="Hammon N."/>
            <person name="Israni S."/>
            <person name="Dalin E."/>
            <person name="Tice H."/>
            <person name="Pitluck S."/>
            <person name="Chertkov O."/>
            <person name="Brettin T."/>
            <person name="Bruce D."/>
            <person name="Han C."/>
            <person name="Schmutz J."/>
            <person name="Larimer F."/>
            <person name="Land M.L."/>
            <person name="Hauser L."/>
            <person name="Kyrpides N."/>
            <person name="Mikhailova N."/>
            <person name="Ye Q."/>
            <person name="Zhou J."/>
            <person name="Richardson P."/>
            <person name="Fields M.W."/>
        </authorList>
    </citation>
    <scope>NUCLEOTIDE SEQUENCE [LARGE SCALE GENOMIC DNA]</scope>
    <source>
        <strain>QYMF</strain>
    </source>
</reference>